<dbReference type="EC" id="5.2.1.8" evidence="2"/>
<dbReference type="EMBL" id="AL450346">
    <property type="status" value="NOT_ANNOTATED_CDS"/>
    <property type="molecule type" value="Genomic_DNA"/>
</dbReference>
<dbReference type="EMBL" id="CH471143">
    <property type="protein sequence ID" value="EAW88492.1"/>
    <property type="molecule type" value="Genomic_DNA"/>
</dbReference>
<dbReference type="CCDS" id="CCDS93938.1"/>
<dbReference type="RefSeq" id="NP_001382909.1">
    <property type="nucleotide sequence ID" value="NM_001395980.1"/>
</dbReference>
<dbReference type="SMR" id="Q5VVH2"/>
<dbReference type="FunCoup" id="Q5VVH2">
    <property type="interactions" value="218"/>
</dbReference>
<dbReference type="STRING" id="9606.ENSP00000359693"/>
<dbReference type="iPTMnet" id="Q5VVH2"/>
<dbReference type="PhosphoSitePlus" id="Q5VVH2"/>
<dbReference type="BioMuta" id="FKBP1C"/>
<dbReference type="jPOST" id="Q5VVH2"/>
<dbReference type="MassIVE" id="Q5VVH2"/>
<dbReference type="PaxDb" id="9606-ENSP00000359693"/>
<dbReference type="PeptideAtlas" id="Q5VVH2"/>
<dbReference type="ProteomicsDB" id="65464"/>
<dbReference type="Ensembl" id="ENST00000370659.2">
    <property type="protein sequence ID" value="ENSP00000359693.1"/>
    <property type="gene ID" value="ENSG00000198225.6"/>
</dbReference>
<dbReference type="GeneID" id="642489"/>
<dbReference type="MANE-Select" id="ENST00000370659.2">
    <property type="protein sequence ID" value="ENSP00000359693.1"/>
    <property type="RefSeq nucleotide sequence ID" value="NM_001395980.1"/>
    <property type="RefSeq protein sequence ID" value="NP_001382909.1"/>
</dbReference>
<dbReference type="UCSC" id="uc063phw.1">
    <property type="organism name" value="human"/>
</dbReference>
<dbReference type="AGR" id="HGNC:21376"/>
<dbReference type="GeneCards" id="FKBP1C"/>
<dbReference type="HGNC" id="HGNC:21376">
    <property type="gene designation" value="FKBP1C"/>
</dbReference>
<dbReference type="OpenTargets" id="ENSG00000198225"/>
<dbReference type="VEuPathDB" id="HostDB:ENSG00000198225"/>
<dbReference type="eggNOG" id="KOG0544">
    <property type="taxonomic scope" value="Eukaryota"/>
</dbReference>
<dbReference type="GeneTree" id="ENSGT00940000153311"/>
<dbReference type="HOGENOM" id="CLU_013615_12_1_1"/>
<dbReference type="InParanoid" id="Q5VVH2"/>
<dbReference type="OMA" id="ATLKFEM"/>
<dbReference type="OrthoDB" id="1902587at2759"/>
<dbReference type="PAN-GO" id="Q5VVH2">
    <property type="GO annotations" value="4 GO annotations based on evolutionary models"/>
</dbReference>
<dbReference type="TreeFam" id="TF105291"/>
<dbReference type="ChiTaRS" id="FKBP1C">
    <property type="organism name" value="human"/>
</dbReference>
<dbReference type="PRO" id="PR:Q5VVH2"/>
<dbReference type="Proteomes" id="UP000005640">
    <property type="component" value="Chromosome 6"/>
</dbReference>
<dbReference type="RNAct" id="Q5VVH2">
    <property type="molecule type" value="protein"/>
</dbReference>
<dbReference type="Bgee" id="ENSG00000198225">
    <property type="expression patterns" value="Expressed in male germ line stem cell (sensu Vertebrata) in testis and 24 other cell types or tissues"/>
</dbReference>
<dbReference type="GO" id="GO:0005737">
    <property type="term" value="C:cytoplasm"/>
    <property type="evidence" value="ECO:0000318"/>
    <property type="project" value="GO_Central"/>
</dbReference>
<dbReference type="GO" id="GO:0033017">
    <property type="term" value="C:sarcoplasmic reticulum membrane"/>
    <property type="evidence" value="ECO:0000318"/>
    <property type="project" value="GO_Central"/>
</dbReference>
<dbReference type="GO" id="GO:0003755">
    <property type="term" value="F:peptidyl-prolyl cis-trans isomerase activity"/>
    <property type="evidence" value="ECO:0000318"/>
    <property type="project" value="GO_Central"/>
</dbReference>
<dbReference type="GO" id="GO:0032926">
    <property type="term" value="P:negative regulation of activin receptor signaling pathway"/>
    <property type="evidence" value="ECO:0000318"/>
    <property type="project" value="GO_Central"/>
</dbReference>
<dbReference type="GO" id="GO:0030512">
    <property type="term" value="P:negative regulation of transforming growth factor beta receptor signaling pathway"/>
    <property type="evidence" value="ECO:0000318"/>
    <property type="project" value="GO_Central"/>
</dbReference>
<dbReference type="FunFam" id="3.10.50.40:FF:000024">
    <property type="entry name" value="Peptidyl-prolyl cis-trans isomerase FKBP1A"/>
    <property type="match status" value="1"/>
</dbReference>
<dbReference type="Gene3D" id="3.10.50.40">
    <property type="match status" value="1"/>
</dbReference>
<dbReference type="InterPro" id="IPR050689">
    <property type="entry name" value="FKBP-type_PPIase"/>
</dbReference>
<dbReference type="InterPro" id="IPR046357">
    <property type="entry name" value="PPIase_dom_sf"/>
</dbReference>
<dbReference type="InterPro" id="IPR001179">
    <property type="entry name" value="PPIase_FKBP_dom"/>
</dbReference>
<dbReference type="PANTHER" id="PTHR10516">
    <property type="entry name" value="PEPTIDYL-PROLYL CIS-TRANS ISOMERASE"/>
    <property type="match status" value="1"/>
</dbReference>
<dbReference type="PANTHER" id="PTHR10516:SF301">
    <property type="entry name" value="PEPTIDYL-PROLYL CIS-TRANS ISOMERASE FKBP1A-RELATED"/>
    <property type="match status" value="1"/>
</dbReference>
<dbReference type="Pfam" id="PF00254">
    <property type="entry name" value="FKBP_C"/>
    <property type="match status" value="1"/>
</dbReference>
<dbReference type="SUPFAM" id="SSF54534">
    <property type="entry name" value="FKBP-like"/>
    <property type="match status" value="1"/>
</dbReference>
<dbReference type="PROSITE" id="PS50059">
    <property type="entry name" value="FKBP_PPIASE"/>
    <property type="match status" value="1"/>
</dbReference>
<name>FKB1C_HUMAN</name>
<gene>
    <name evidence="4" type="primary">FKBP1C</name>
</gene>
<keyword id="KW-0413">Isomerase</keyword>
<keyword id="KW-1267">Proteomics identification</keyword>
<keyword id="KW-1185">Reference proteome</keyword>
<keyword id="KW-0697">Rotamase</keyword>
<evidence type="ECO:0000250" key="1">
    <source>
        <dbReference type="UniProtKB" id="P62942"/>
    </source>
</evidence>
<evidence type="ECO:0000255" key="2">
    <source>
        <dbReference type="PROSITE-ProRule" id="PRU00277"/>
    </source>
</evidence>
<evidence type="ECO:0000305" key="3"/>
<evidence type="ECO:0000312" key="4">
    <source>
        <dbReference type="HGNC" id="HGNC:21376"/>
    </source>
</evidence>
<comment type="function">
    <text evidence="1">Catalyzes the cis-trans isomerization of proline imidic peptide bonds in oligopeptides.</text>
</comment>
<comment type="catalytic activity">
    <reaction evidence="2">
        <text>[protein]-peptidylproline (omega=180) = [protein]-peptidylproline (omega=0)</text>
        <dbReference type="Rhea" id="RHEA:16237"/>
        <dbReference type="Rhea" id="RHEA-COMP:10747"/>
        <dbReference type="Rhea" id="RHEA-COMP:10748"/>
        <dbReference type="ChEBI" id="CHEBI:83833"/>
        <dbReference type="ChEBI" id="CHEBI:83834"/>
        <dbReference type="EC" id="5.2.1.8"/>
    </reaction>
</comment>
<comment type="similarity">
    <text evidence="3">Belongs to the FKBP-type PPIase family. FKBP1 subfamily.</text>
</comment>
<reference key="1">
    <citation type="journal article" date="2003" name="Nature">
        <title>The DNA sequence and analysis of human chromosome 6.</title>
        <authorList>
            <person name="Mungall A.J."/>
            <person name="Palmer S.A."/>
            <person name="Sims S.K."/>
            <person name="Edwards C.A."/>
            <person name="Ashurst J.L."/>
            <person name="Wilming L."/>
            <person name="Jones M.C."/>
            <person name="Horton R."/>
            <person name="Hunt S.E."/>
            <person name="Scott C.E."/>
            <person name="Gilbert J.G.R."/>
            <person name="Clamp M.E."/>
            <person name="Bethel G."/>
            <person name="Milne S."/>
            <person name="Ainscough R."/>
            <person name="Almeida J.P."/>
            <person name="Ambrose K.D."/>
            <person name="Andrews T.D."/>
            <person name="Ashwell R.I.S."/>
            <person name="Babbage A.K."/>
            <person name="Bagguley C.L."/>
            <person name="Bailey J."/>
            <person name="Banerjee R."/>
            <person name="Barker D.J."/>
            <person name="Barlow K.F."/>
            <person name="Bates K."/>
            <person name="Beare D.M."/>
            <person name="Beasley H."/>
            <person name="Beasley O."/>
            <person name="Bird C.P."/>
            <person name="Blakey S.E."/>
            <person name="Bray-Allen S."/>
            <person name="Brook J."/>
            <person name="Brown A.J."/>
            <person name="Brown J.Y."/>
            <person name="Burford D.C."/>
            <person name="Burrill W."/>
            <person name="Burton J."/>
            <person name="Carder C."/>
            <person name="Carter N.P."/>
            <person name="Chapman J.C."/>
            <person name="Clark S.Y."/>
            <person name="Clark G."/>
            <person name="Clee C.M."/>
            <person name="Clegg S."/>
            <person name="Cobley V."/>
            <person name="Collier R.E."/>
            <person name="Collins J.E."/>
            <person name="Colman L.K."/>
            <person name="Corby N.R."/>
            <person name="Coville G.J."/>
            <person name="Culley K.M."/>
            <person name="Dhami P."/>
            <person name="Davies J."/>
            <person name="Dunn M."/>
            <person name="Earthrowl M.E."/>
            <person name="Ellington A.E."/>
            <person name="Evans K.A."/>
            <person name="Faulkner L."/>
            <person name="Francis M.D."/>
            <person name="Frankish A."/>
            <person name="Frankland J."/>
            <person name="French L."/>
            <person name="Garner P."/>
            <person name="Garnett J."/>
            <person name="Ghori M.J."/>
            <person name="Gilby L.M."/>
            <person name="Gillson C.J."/>
            <person name="Glithero R.J."/>
            <person name="Grafham D.V."/>
            <person name="Grant M."/>
            <person name="Gribble S."/>
            <person name="Griffiths C."/>
            <person name="Griffiths M.N.D."/>
            <person name="Hall R."/>
            <person name="Halls K.S."/>
            <person name="Hammond S."/>
            <person name="Harley J.L."/>
            <person name="Hart E.A."/>
            <person name="Heath P.D."/>
            <person name="Heathcott R."/>
            <person name="Holmes S.J."/>
            <person name="Howden P.J."/>
            <person name="Howe K.L."/>
            <person name="Howell G.R."/>
            <person name="Huckle E."/>
            <person name="Humphray S.J."/>
            <person name="Humphries M.D."/>
            <person name="Hunt A.R."/>
            <person name="Johnson C.M."/>
            <person name="Joy A.A."/>
            <person name="Kay M."/>
            <person name="Keenan S.J."/>
            <person name="Kimberley A.M."/>
            <person name="King A."/>
            <person name="Laird G.K."/>
            <person name="Langford C."/>
            <person name="Lawlor S."/>
            <person name="Leongamornlert D.A."/>
            <person name="Leversha M."/>
            <person name="Lloyd C.R."/>
            <person name="Lloyd D.M."/>
            <person name="Loveland J.E."/>
            <person name="Lovell J."/>
            <person name="Martin S."/>
            <person name="Mashreghi-Mohammadi M."/>
            <person name="Maslen G.L."/>
            <person name="Matthews L."/>
            <person name="McCann O.T."/>
            <person name="McLaren S.J."/>
            <person name="McLay K."/>
            <person name="McMurray A."/>
            <person name="Moore M.J.F."/>
            <person name="Mullikin J.C."/>
            <person name="Niblett D."/>
            <person name="Nickerson T."/>
            <person name="Novik K.L."/>
            <person name="Oliver K."/>
            <person name="Overton-Larty E.K."/>
            <person name="Parker A."/>
            <person name="Patel R."/>
            <person name="Pearce A.V."/>
            <person name="Peck A.I."/>
            <person name="Phillimore B.J.C.T."/>
            <person name="Phillips S."/>
            <person name="Plumb R.W."/>
            <person name="Porter K.M."/>
            <person name="Ramsey Y."/>
            <person name="Ranby S.A."/>
            <person name="Rice C.M."/>
            <person name="Ross M.T."/>
            <person name="Searle S.M."/>
            <person name="Sehra H.K."/>
            <person name="Sheridan E."/>
            <person name="Skuce C.D."/>
            <person name="Smith S."/>
            <person name="Smith M."/>
            <person name="Spraggon L."/>
            <person name="Squares S.L."/>
            <person name="Steward C.A."/>
            <person name="Sycamore N."/>
            <person name="Tamlyn-Hall G."/>
            <person name="Tester J."/>
            <person name="Theaker A.J."/>
            <person name="Thomas D.W."/>
            <person name="Thorpe A."/>
            <person name="Tracey A."/>
            <person name="Tromans A."/>
            <person name="Tubby B."/>
            <person name="Wall M."/>
            <person name="Wallis J.M."/>
            <person name="West A.P."/>
            <person name="White S.S."/>
            <person name="Whitehead S.L."/>
            <person name="Whittaker H."/>
            <person name="Wild A."/>
            <person name="Willey D.J."/>
            <person name="Wilmer T.E."/>
            <person name="Wood J.M."/>
            <person name="Wray P.W."/>
            <person name="Wyatt J.C."/>
            <person name="Young L."/>
            <person name="Younger R.M."/>
            <person name="Bentley D.R."/>
            <person name="Coulson A."/>
            <person name="Durbin R.M."/>
            <person name="Hubbard T."/>
            <person name="Sulston J.E."/>
            <person name="Dunham I."/>
            <person name="Rogers J."/>
            <person name="Beck S."/>
        </authorList>
    </citation>
    <scope>NUCLEOTIDE SEQUENCE [LARGE SCALE GENOMIC DNA]</scope>
</reference>
<reference key="2">
    <citation type="submission" date="2005-07" db="EMBL/GenBank/DDBJ databases">
        <authorList>
            <person name="Mural R.J."/>
            <person name="Istrail S."/>
            <person name="Sutton G.G."/>
            <person name="Florea L."/>
            <person name="Halpern A.L."/>
            <person name="Mobarry C.M."/>
            <person name="Lippert R."/>
            <person name="Walenz B."/>
            <person name="Shatkay H."/>
            <person name="Dew I."/>
            <person name="Miller J.R."/>
            <person name="Flanigan M.J."/>
            <person name="Edwards N.J."/>
            <person name="Bolanos R."/>
            <person name="Fasulo D."/>
            <person name="Halldorsson B.V."/>
            <person name="Hannenhalli S."/>
            <person name="Turner R."/>
            <person name="Yooseph S."/>
            <person name="Lu F."/>
            <person name="Nusskern D.R."/>
            <person name="Shue B.C."/>
            <person name="Zheng X.H."/>
            <person name="Zhong F."/>
            <person name="Delcher A.L."/>
            <person name="Huson D.H."/>
            <person name="Kravitz S.A."/>
            <person name="Mouchard L."/>
            <person name="Reinert K."/>
            <person name="Remington K.A."/>
            <person name="Clark A.G."/>
            <person name="Waterman M.S."/>
            <person name="Eichler E.E."/>
            <person name="Adams M.D."/>
            <person name="Hunkapiller M.W."/>
            <person name="Myers E.W."/>
            <person name="Venter J.C."/>
        </authorList>
    </citation>
    <scope>NUCLEOTIDE SEQUENCE [LARGE SCALE GENOMIC DNA]</scope>
</reference>
<organism>
    <name type="scientific">Homo sapiens</name>
    <name type="common">Human</name>
    <dbReference type="NCBI Taxonomy" id="9606"/>
    <lineage>
        <taxon>Eukaryota</taxon>
        <taxon>Metazoa</taxon>
        <taxon>Chordata</taxon>
        <taxon>Craniata</taxon>
        <taxon>Vertebrata</taxon>
        <taxon>Euteleostomi</taxon>
        <taxon>Mammalia</taxon>
        <taxon>Eutheria</taxon>
        <taxon>Euarchontoglires</taxon>
        <taxon>Primates</taxon>
        <taxon>Haplorrhini</taxon>
        <taxon>Catarrhini</taxon>
        <taxon>Hominidae</taxon>
        <taxon>Homo</taxon>
    </lineage>
</organism>
<accession>Q5VVH2</accession>
<proteinExistence type="evidence at protein level"/>
<feature type="chain" id="PRO_0000457408" description="Peptidyl-prolyl cis-trans isomerase FKBP1C">
    <location>
        <begin position="1"/>
        <end position="108"/>
    </location>
</feature>
<feature type="domain" description="PPIase FKBP-type" evidence="2">
    <location>
        <begin position="20"/>
        <end position="108"/>
    </location>
</feature>
<sequence length="108" mass="12179">MGVHVETISPGDWRTFPKRSQTCVMHYTGMLEDGKKFDSSRDRNKPFKFMLGKQEVIRGWEEGVVQMSVGQRAKLTISPDYAYGATGHPGIIPPHATLVFDVELLKLE</sequence>
<protein>
    <recommendedName>
        <fullName evidence="3">Peptidyl-prolyl cis-trans isomerase FKBP1C</fullName>
        <ecNumber evidence="2">5.2.1.8</ecNumber>
    </recommendedName>
</protein>